<protein>
    <recommendedName>
        <fullName evidence="1">Germination protease</fullName>
        <ecNumber evidence="1">3.4.24.78</ecNumber>
    </recommendedName>
    <alternativeName>
        <fullName evidence="1">GPR endopeptidase</fullName>
    </alternativeName>
    <alternativeName>
        <fullName evidence="1">Germination proteinase</fullName>
    </alternativeName>
    <alternativeName>
        <fullName evidence="1">Spore protease</fullName>
    </alternativeName>
</protein>
<feature type="propeptide" id="PRO_0000026860" evidence="1">
    <location>
        <begin position="1"/>
        <end position="15"/>
    </location>
</feature>
<feature type="chain" id="PRO_0000026861" description="Germination protease">
    <location>
        <begin position="16"/>
        <end position="367"/>
    </location>
</feature>
<dbReference type="EC" id="3.4.24.78" evidence="1"/>
<dbReference type="EMBL" id="AE016877">
    <property type="protein sequence ID" value="AAP11232.1"/>
    <property type="molecule type" value="Genomic_DNA"/>
</dbReference>
<dbReference type="RefSeq" id="NP_834031.1">
    <property type="nucleotide sequence ID" value="NC_004722.1"/>
</dbReference>
<dbReference type="RefSeq" id="WP_000662617.1">
    <property type="nucleotide sequence ID" value="NC_004722.1"/>
</dbReference>
<dbReference type="SMR" id="Q818E2"/>
<dbReference type="STRING" id="226900.BC_4319"/>
<dbReference type="MEROPS" id="A25.001"/>
<dbReference type="KEGG" id="bce:BC4319"/>
<dbReference type="PATRIC" id="fig|226900.8.peg.4466"/>
<dbReference type="HOGENOM" id="CLU_055087_1_0_9"/>
<dbReference type="Proteomes" id="UP000001417">
    <property type="component" value="Chromosome"/>
</dbReference>
<dbReference type="GO" id="GO:0004222">
    <property type="term" value="F:metalloendopeptidase activity"/>
    <property type="evidence" value="ECO:0007669"/>
    <property type="project" value="UniProtKB-UniRule"/>
</dbReference>
<dbReference type="GO" id="GO:0006508">
    <property type="term" value="P:proteolysis"/>
    <property type="evidence" value="ECO:0007669"/>
    <property type="project" value="UniProtKB-UniRule"/>
</dbReference>
<dbReference type="GO" id="GO:0009847">
    <property type="term" value="P:spore germination"/>
    <property type="evidence" value="ECO:0007669"/>
    <property type="project" value="UniProtKB-UniRule"/>
</dbReference>
<dbReference type="Gene3D" id="3.40.50.1450">
    <property type="entry name" value="HybD-like"/>
    <property type="match status" value="1"/>
</dbReference>
<dbReference type="HAMAP" id="MF_00626">
    <property type="entry name" value="Germination_prot"/>
    <property type="match status" value="1"/>
</dbReference>
<dbReference type="InterPro" id="IPR023430">
    <property type="entry name" value="Pept_HybD-like_dom_sf"/>
</dbReference>
<dbReference type="InterPro" id="IPR005080">
    <property type="entry name" value="Peptidase_A25"/>
</dbReference>
<dbReference type="NCBIfam" id="TIGR01441">
    <property type="entry name" value="GPR"/>
    <property type="match status" value="1"/>
</dbReference>
<dbReference type="Pfam" id="PF03418">
    <property type="entry name" value="Peptidase_A25"/>
    <property type="match status" value="1"/>
</dbReference>
<dbReference type="PIRSF" id="PIRSF019549">
    <property type="entry name" value="Peptidase_A25"/>
    <property type="match status" value="1"/>
</dbReference>
<dbReference type="SUPFAM" id="SSF53163">
    <property type="entry name" value="HybD-like"/>
    <property type="match status" value="1"/>
</dbReference>
<comment type="function">
    <text evidence="1">Initiates the rapid degradation of small, acid-soluble proteins during spore germination.</text>
</comment>
<comment type="catalytic activity">
    <reaction evidence="1">
        <text>Endopeptidase action with P4 Glu or Asp, P1 preferably Glu &gt; Asp, P1' hydrophobic and P2' Ala.</text>
        <dbReference type="EC" id="3.4.24.78"/>
    </reaction>
</comment>
<comment type="subunit">
    <text evidence="1">Homotetramer.</text>
</comment>
<comment type="PTM">
    <text evidence="1">Autoproteolytically processed. The inactive tetrameric zymogen termed p46 autoprocesses to a smaller form termed p41, which is active only during spore germination.</text>
</comment>
<comment type="similarity">
    <text evidence="1">Belongs to the peptidase A25 family.</text>
</comment>
<organism>
    <name type="scientific">Bacillus cereus (strain ATCC 14579 / DSM 31 / CCUG 7414 / JCM 2152 / NBRC 15305 / NCIMB 9373 / NCTC 2599 / NRRL B-3711)</name>
    <dbReference type="NCBI Taxonomy" id="226900"/>
    <lineage>
        <taxon>Bacteria</taxon>
        <taxon>Bacillati</taxon>
        <taxon>Bacillota</taxon>
        <taxon>Bacilli</taxon>
        <taxon>Bacillales</taxon>
        <taxon>Bacillaceae</taxon>
        <taxon>Bacillus</taxon>
        <taxon>Bacillus cereus group</taxon>
    </lineage>
</organism>
<gene>
    <name evidence="1" type="primary">gpr</name>
    <name type="ordered locus">BC_4319</name>
</gene>
<evidence type="ECO:0000255" key="1">
    <source>
        <dbReference type="HAMAP-Rule" id="MF_00626"/>
    </source>
</evidence>
<proteinExistence type="inferred from homology"/>
<sequence length="367" mass="40361">MKEPLDLSKYSIRTDLAVEAHQMLQESQEEQKGIQGVIVKEREEEGTIITKVTIDEAASEAMGKKPGNYLTLEVQGIRQQDTELQQKVERIFAKEFSCFLEEVGVTKEASCLIVGLGNWNVTPDALGPIVVENVLVTRHLFQLQPESVEEGFRPVSAIRPGVMGITGIETSDVIYGIIEKTNPDFVIAIDALAARSIERVNSTIQISDTGIHPGSGVGNKRKELSKDTLGIPVIAIGVPTVVDAVSITSDTIDFILKHFGREMKEGNKPSRSLLPAGFSFGEKKQLTQEDMPDEKSRNMFLGVVGTLEEEEKRRLIYEVLSLLGHNLMVPPKEVDSFIEDMANVIASGLNAALHHQIDQDNTGAYTH</sequence>
<name>GPR_BACCR</name>
<keyword id="KW-0378">Hydrolase</keyword>
<keyword id="KW-0645">Protease</keyword>
<keyword id="KW-1185">Reference proteome</keyword>
<keyword id="KW-0865">Zymogen</keyword>
<accession>Q818E2</accession>
<reference key="1">
    <citation type="journal article" date="2003" name="Nature">
        <title>Genome sequence of Bacillus cereus and comparative analysis with Bacillus anthracis.</title>
        <authorList>
            <person name="Ivanova N."/>
            <person name="Sorokin A."/>
            <person name="Anderson I."/>
            <person name="Galleron N."/>
            <person name="Candelon B."/>
            <person name="Kapatral V."/>
            <person name="Bhattacharyya A."/>
            <person name="Reznik G."/>
            <person name="Mikhailova N."/>
            <person name="Lapidus A."/>
            <person name="Chu L."/>
            <person name="Mazur M."/>
            <person name="Goltsman E."/>
            <person name="Larsen N."/>
            <person name="D'Souza M."/>
            <person name="Walunas T."/>
            <person name="Grechkin Y."/>
            <person name="Pusch G."/>
            <person name="Haselkorn R."/>
            <person name="Fonstein M."/>
            <person name="Ehrlich S.D."/>
            <person name="Overbeek R."/>
            <person name="Kyrpides N.C."/>
        </authorList>
    </citation>
    <scope>NUCLEOTIDE SEQUENCE [LARGE SCALE GENOMIC DNA]</scope>
    <source>
        <strain>ATCC 14579 / DSM 31 / CCUG 7414 / JCM 2152 / NBRC 15305 / NCIMB 9373 / NCTC 2599 / NRRL B-3711</strain>
    </source>
</reference>